<dbReference type="EC" id="1.2.1.11" evidence="1"/>
<dbReference type="EMBL" id="BA000003">
    <property type="protein sequence ID" value="BAB13146.1"/>
    <property type="molecule type" value="Genomic_DNA"/>
</dbReference>
<dbReference type="RefSeq" id="NP_240260.1">
    <property type="nucleotide sequence ID" value="NC_002528.1"/>
</dbReference>
<dbReference type="RefSeq" id="WP_010896121.1">
    <property type="nucleotide sequence ID" value="NZ_AP036055.1"/>
</dbReference>
<dbReference type="SMR" id="P57523"/>
<dbReference type="STRING" id="563178.BUAP5A_441"/>
<dbReference type="EnsemblBacteria" id="BAB13146">
    <property type="protein sequence ID" value="BAB13146"/>
    <property type="gene ID" value="BAB13146"/>
</dbReference>
<dbReference type="KEGG" id="buc:BU448"/>
<dbReference type="PATRIC" id="fig|107806.10.peg.458"/>
<dbReference type="eggNOG" id="COG0136">
    <property type="taxonomic scope" value="Bacteria"/>
</dbReference>
<dbReference type="HOGENOM" id="CLU_066397_0_0_6"/>
<dbReference type="UniPathway" id="UPA00034">
    <property type="reaction ID" value="UER00016"/>
</dbReference>
<dbReference type="UniPathway" id="UPA00050">
    <property type="reaction ID" value="UER00463"/>
</dbReference>
<dbReference type="UniPathway" id="UPA00051">
    <property type="reaction ID" value="UER00464"/>
</dbReference>
<dbReference type="Proteomes" id="UP000001806">
    <property type="component" value="Chromosome"/>
</dbReference>
<dbReference type="GO" id="GO:0004073">
    <property type="term" value="F:aspartate-semialdehyde dehydrogenase activity"/>
    <property type="evidence" value="ECO:0007669"/>
    <property type="project" value="UniProtKB-UniRule"/>
</dbReference>
<dbReference type="GO" id="GO:0051287">
    <property type="term" value="F:NAD binding"/>
    <property type="evidence" value="ECO:0007669"/>
    <property type="project" value="InterPro"/>
</dbReference>
<dbReference type="GO" id="GO:0050661">
    <property type="term" value="F:NADP binding"/>
    <property type="evidence" value="ECO:0007669"/>
    <property type="project" value="UniProtKB-UniRule"/>
</dbReference>
<dbReference type="GO" id="GO:0046983">
    <property type="term" value="F:protein dimerization activity"/>
    <property type="evidence" value="ECO:0007669"/>
    <property type="project" value="InterPro"/>
</dbReference>
<dbReference type="GO" id="GO:0071266">
    <property type="term" value="P:'de novo' L-methionine biosynthetic process"/>
    <property type="evidence" value="ECO:0007669"/>
    <property type="project" value="UniProtKB-UniRule"/>
</dbReference>
<dbReference type="GO" id="GO:0019877">
    <property type="term" value="P:diaminopimelate biosynthetic process"/>
    <property type="evidence" value="ECO:0007669"/>
    <property type="project" value="UniProtKB-UniRule"/>
</dbReference>
<dbReference type="GO" id="GO:0009097">
    <property type="term" value="P:isoleucine biosynthetic process"/>
    <property type="evidence" value="ECO:0007669"/>
    <property type="project" value="InterPro"/>
</dbReference>
<dbReference type="GO" id="GO:0009089">
    <property type="term" value="P:lysine biosynthetic process via diaminopimelate"/>
    <property type="evidence" value="ECO:0007669"/>
    <property type="project" value="UniProtKB-UniRule"/>
</dbReference>
<dbReference type="GO" id="GO:0009088">
    <property type="term" value="P:threonine biosynthetic process"/>
    <property type="evidence" value="ECO:0007669"/>
    <property type="project" value="UniProtKB-UniRule"/>
</dbReference>
<dbReference type="CDD" id="cd23938">
    <property type="entry name" value="ASADH_C_bac_like"/>
    <property type="match status" value="1"/>
</dbReference>
<dbReference type="CDD" id="cd02314">
    <property type="entry name" value="VcASADH1_like_N"/>
    <property type="match status" value="1"/>
</dbReference>
<dbReference type="Gene3D" id="3.30.360.10">
    <property type="entry name" value="Dihydrodipicolinate Reductase, domain 2"/>
    <property type="match status" value="1"/>
</dbReference>
<dbReference type="Gene3D" id="3.40.50.720">
    <property type="entry name" value="NAD(P)-binding Rossmann-like Domain"/>
    <property type="match status" value="1"/>
</dbReference>
<dbReference type="HAMAP" id="MF_02121">
    <property type="entry name" value="ASADH"/>
    <property type="match status" value="1"/>
</dbReference>
<dbReference type="InterPro" id="IPR000319">
    <property type="entry name" value="Asp-semialdehyde_DH_CS"/>
</dbReference>
<dbReference type="InterPro" id="IPR011534">
    <property type="entry name" value="Asp_ADH_gamma-type"/>
</dbReference>
<dbReference type="InterPro" id="IPR012080">
    <property type="entry name" value="Asp_semialdehyde_DH"/>
</dbReference>
<dbReference type="InterPro" id="IPR036291">
    <property type="entry name" value="NAD(P)-bd_dom_sf"/>
</dbReference>
<dbReference type="InterPro" id="IPR000534">
    <property type="entry name" value="Semialdehyde_DH_NAD-bd"/>
</dbReference>
<dbReference type="InterPro" id="IPR012280">
    <property type="entry name" value="Semialdhyde_DH_dimer_dom"/>
</dbReference>
<dbReference type="NCBIfam" id="TIGR01745">
    <property type="entry name" value="asd_gamma"/>
    <property type="match status" value="1"/>
</dbReference>
<dbReference type="NCBIfam" id="NF005144">
    <property type="entry name" value="PRK06598.1"/>
    <property type="match status" value="1"/>
</dbReference>
<dbReference type="PANTHER" id="PTHR46278:SF4">
    <property type="entry name" value="ASPARTATE-SEMIALDEHYDE DEHYDROGENASE"/>
    <property type="match status" value="1"/>
</dbReference>
<dbReference type="PANTHER" id="PTHR46278">
    <property type="entry name" value="DEHYDROGENASE, PUTATIVE-RELATED"/>
    <property type="match status" value="1"/>
</dbReference>
<dbReference type="Pfam" id="PF01118">
    <property type="entry name" value="Semialdhyde_dh"/>
    <property type="match status" value="1"/>
</dbReference>
<dbReference type="Pfam" id="PF02774">
    <property type="entry name" value="Semialdhyde_dhC"/>
    <property type="match status" value="1"/>
</dbReference>
<dbReference type="PIRSF" id="PIRSF000148">
    <property type="entry name" value="ASA_dh"/>
    <property type="match status" value="1"/>
</dbReference>
<dbReference type="SMART" id="SM00859">
    <property type="entry name" value="Semialdhyde_dh"/>
    <property type="match status" value="1"/>
</dbReference>
<dbReference type="SUPFAM" id="SSF55347">
    <property type="entry name" value="Glyceraldehyde-3-phosphate dehydrogenase-like, C-terminal domain"/>
    <property type="match status" value="1"/>
</dbReference>
<dbReference type="SUPFAM" id="SSF51735">
    <property type="entry name" value="NAD(P)-binding Rossmann-fold domains"/>
    <property type="match status" value="1"/>
</dbReference>
<dbReference type="PROSITE" id="PS01103">
    <property type="entry name" value="ASD"/>
    <property type="match status" value="1"/>
</dbReference>
<gene>
    <name evidence="1" type="primary">asd</name>
    <name type="ordered locus">BU448</name>
</gene>
<organism>
    <name type="scientific">Buchnera aphidicola subsp. Acyrthosiphon pisum (strain APS)</name>
    <name type="common">Acyrthosiphon pisum symbiotic bacterium</name>
    <dbReference type="NCBI Taxonomy" id="107806"/>
    <lineage>
        <taxon>Bacteria</taxon>
        <taxon>Pseudomonadati</taxon>
        <taxon>Pseudomonadota</taxon>
        <taxon>Gammaproteobacteria</taxon>
        <taxon>Enterobacterales</taxon>
        <taxon>Erwiniaceae</taxon>
        <taxon>Buchnera</taxon>
    </lineage>
</organism>
<comment type="function">
    <text evidence="1">Catalyzes the NADPH-dependent formation of L-aspartate-semialdehyde (L-ASA) by the reductive dephosphorylation of L-aspartyl-4-phosphate.</text>
</comment>
<comment type="catalytic activity">
    <reaction evidence="1">
        <text>L-aspartate 4-semialdehyde + phosphate + NADP(+) = 4-phospho-L-aspartate + NADPH + H(+)</text>
        <dbReference type="Rhea" id="RHEA:24284"/>
        <dbReference type="ChEBI" id="CHEBI:15378"/>
        <dbReference type="ChEBI" id="CHEBI:43474"/>
        <dbReference type="ChEBI" id="CHEBI:57535"/>
        <dbReference type="ChEBI" id="CHEBI:57783"/>
        <dbReference type="ChEBI" id="CHEBI:58349"/>
        <dbReference type="ChEBI" id="CHEBI:537519"/>
        <dbReference type="EC" id="1.2.1.11"/>
    </reaction>
</comment>
<comment type="pathway">
    <text evidence="1">Amino-acid biosynthesis; L-lysine biosynthesis via DAP pathway; (S)-tetrahydrodipicolinate from L-aspartate: step 2/4.</text>
</comment>
<comment type="pathway">
    <text evidence="1">Amino-acid biosynthesis; L-methionine biosynthesis via de novo pathway; L-homoserine from L-aspartate: step 2/3.</text>
</comment>
<comment type="pathway">
    <text evidence="1">Amino-acid biosynthesis; L-threonine biosynthesis; L-threonine from L-aspartate: step 2/5.</text>
</comment>
<comment type="subunit">
    <text evidence="1">Homodimer.</text>
</comment>
<comment type="similarity">
    <text evidence="1">Belongs to the aspartate-semialdehyde dehydrogenase family.</text>
</comment>
<keyword id="KW-0028">Amino-acid biosynthesis</keyword>
<keyword id="KW-0220">Diaminopimelate biosynthesis</keyword>
<keyword id="KW-0457">Lysine biosynthesis</keyword>
<keyword id="KW-0486">Methionine biosynthesis</keyword>
<keyword id="KW-0521">NADP</keyword>
<keyword id="KW-0560">Oxidoreductase</keyword>
<keyword id="KW-1185">Reference proteome</keyword>
<keyword id="KW-0791">Threonine biosynthesis</keyword>
<protein>
    <recommendedName>
        <fullName evidence="1">Aspartate-semialdehyde dehydrogenase</fullName>
        <shortName evidence="1">ASA dehydrogenase</shortName>
        <shortName evidence="1">ASADH</shortName>
        <ecNumber evidence="1">1.2.1.11</ecNumber>
    </recommendedName>
    <alternativeName>
        <fullName evidence="1">Aspartate-beta-semialdehyde dehydrogenase</fullName>
    </alternativeName>
</protein>
<accession>P57523</accession>
<feature type="chain" id="PRO_0000141363" description="Aspartate-semialdehyde dehydrogenase">
    <location>
        <begin position="1"/>
        <end position="371"/>
    </location>
</feature>
<feature type="active site" description="Acyl-thioester intermediate" evidence="1">
    <location>
        <position position="137"/>
    </location>
</feature>
<feature type="active site" description="Proton acceptor" evidence="1">
    <location>
        <position position="276"/>
    </location>
</feature>
<feature type="binding site" evidence="1">
    <location>
        <begin position="11"/>
        <end position="14"/>
    </location>
    <ligand>
        <name>NADP(+)</name>
        <dbReference type="ChEBI" id="CHEBI:58349"/>
    </ligand>
</feature>
<feature type="binding site" evidence="1">
    <location>
        <begin position="38"/>
        <end position="39"/>
    </location>
    <ligand>
        <name>NADP(+)</name>
        <dbReference type="ChEBI" id="CHEBI:58349"/>
    </ligand>
</feature>
<feature type="binding site" evidence="1">
    <location>
        <position position="75"/>
    </location>
    <ligand>
        <name>NADP(+)</name>
        <dbReference type="ChEBI" id="CHEBI:58349"/>
    </ligand>
</feature>
<feature type="binding site" evidence="1">
    <location>
        <position position="104"/>
    </location>
    <ligand>
        <name>phosphate</name>
        <dbReference type="ChEBI" id="CHEBI:43474"/>
    </ligand>
</feature>
<feature type="binding site" evidence="1">
    <location>
        <position position="164"/>
    </location>
    <ligand>
        <name>substrate</name>
    </ligand>
</feature>
<feature type="binding site" evidence="1">
    <location>
        <begin position="167"/>
        <end position="168"/>
    </location>
    <ligand>
        <name>NADP(+)</name>
        <dbReference type="ChEBI" id="CHEBI:58349"/>
    </ligand>
</feature>
<feature type="binding site" evidence="1">
    <location>
        <position position="243"/>
    </location>
    <ligand>
        <name>substrate</name>
    </ligand>
</feature>
<feature type="binding site" evidence="1">
    <location>
        <position position="246"/>
    </location>
    <ligand>
        <name>phosphate</name>
        <dbReference type="ChEBI" id="CHEBI:43474"/>
    </ligand>
</feature>
<feature type="binding site" evidence="1">
    <location>
        <position position="269"/>
    </location>
    <ligand>
        <name>substrate</name>
    </ligand>
</feature>
<feature type="binding site" evidence="1">
    <location>
        <position position="352"/>
    </location>
    <ligand>
        <name>NADP(+)</name>
        <dbReference type="ChEBI" id="CHEBI:58349"/>
    </ligand>
</feature>
<proteinExistence type="inferred from homology"/>
<reference key="1">
    <citation type="journal article" date="2000" name="Nature">
        <title>Genome sequence of the endocellular bacterial symbiont of aphids Buchnera sp. APS.</title>
        <authorList>
            <person name="Shigenobu S."/>
            <person name="Watanabe H."/>
            <person name="Hattori M."/>
            <person name="Sakaki Y."/>
            <person name="Ishikawa H."/>
        </authorList>
    </citation>
    <scope>NUCLEOTIDE SEQUENCE [LARGE SCALE GENOMIC DNA]</scope>
    <source>
        <strain>APS</strain>
    </source>
</reference>
<sequence>MIKIVGLVGWRGMVGSVLLKRMQEENDFSRIKPVFFSTSQFGQDGPIINNISYNILENAYNIDVLKEMDIIITCQGGSYTKEIYPTLRKNGWKGYWIDAASNLRMKNDSVIILDPVNYNVIEDSINKGIRTFVGGNCTISLMLMSLGGLFQTELVEWIAVSTYQAASGAGARHMIELLNQMGILYKSVETDLLKGSHSILSIEDKVTKISRSVNFPVKNFSVPLAASLIPWIDTEMSNGQSREEWKGQAETNKILGTKDTILIDGTCVRIGSLRCHSQSFVIKLKKDVSLEDIEEIIRNHNKWVDVIPNSIQDTLLKLTPSSVTGTLNIPIGRLRKLNMGKKYLSAFTVGDQLLWGAAEPLRRMLNILINI</sequence>
<evidence type="ECO:0000255" key="1">
    <source>
        <dbReference type="HAMAP-Rule" id="MF_02121"/>
    </source>
</evidence>
<name>DHAS_BUCAI</name>